<proteinExistence type="evidence at protein level"/>
<keyword id="KW-0903">Direct protein sequencing</keyword>
<keyword id="KW-0574">Periplasm</keyword>
<keyword id="KW-1185">Reference proteome</keyword>
<keyword id="KW-0732">Signal</keyword>
<keyword id="KW-0813">Transport</keyword>
<accession>P77269</accession>
<accession>P76994</accession>
<feature type="signal peptide" evidence="1">
    <location>
        <begin position="1"/>
        <end position="26"/>
    </location>
</feature>
<feature type="chain" id="PRO_0000031744" description="ABC transporter periplasmic-binding protein YphF">
    <location>
        <begin position="27"/>
        <end position="327"/>
    </location>
</feature>
<organism>
    <name type="scientific">Escherichia coli (strain K12)</name>
    <dbReference type="NCBI Taxonomy" id="83333"/>
    <lineage>
        <taxon>Bacteria</taxon>
        <taxon>Pseudomonadati</taxon>
        <taxon>Pseudomonadota</taxon>
        <taxon>Gammaproteobacteria</taxon>
        <taxon>Enterobacterales</taxon>
        <taxon>Enterobacteriaceae</taxon>
        <taxon>Escherichia</taxon>
    </lineage>
</organism>
<reference key="1">
    <citation type="journal article" date="1997" name="DNA Res.">
        <title>Construction of a contiguous 874-kb sequence of the Escherichia coli-K12 genome corresponding to 50.0-68.8 min on the linkage map and analysis of its sequence features.</title>
        <authorList>
            <person name="Yamamoto Y."/>
            <person name="Aiba H."/>
            <person name="Baba T."/>
            <person name="Hayashi K."/>
            <person name="Inada T."/>
            <person name="Isono K."/>
            <person name="Itoh T."/>
            <person name="Kimura S."/>
            <person name="Kitagawa M."/>
            <person name="Makino K."/>
            <person name="Miki T."/>
            <person name="Mitsuhashi N."/>
            <person name="Mizobuchi K."/>
            <person name="Mori H."/>
            <person name="Nakade S."/>
            <person name="Nakamura Y."/>
            <person name="Nashimoto H."/>
            <person name="Oshima T."/>
            <person name="Oyama S."/>
            <person name="Saito N."/>
            <person name="Sampei G."/>
            <person name="Satoh Y."/>
            <person name="Sivasundaram S."/>
            <person name="Tagami H."/>
            <person name="Takahashi H."/>
            <person name="Takeda J."/>
            <person name="Takemoto K."/>
            <person name="Uehara K."/>
            <person name="Wada C."/>
            <person name="Yamagata S."/>
            <person name="Horiuchi T."/>
        </authorList>
    </citation>
    <scope>NUCLEOTIDE SEQUENCE [LARGE SCALE GENOMIC DNA]</scope>
    <source>
        <strain>K12 / W3110 / ATCC 27325 / DSM 5911</strain>
    </source>
</reference>
<reference key="2">
    <citation type="journal article" date="1997" name="Science">
        <title>The complete genome sequence of Escherichia coli K-12.</title>
        <authorList>
            <person name="Blattner F.R."/>
            <person name="Plunkett G. III"/>
            <person name="Bloch C.A."/>
            <person name="Perna N.T."/>
            <person name="Burland V."/>
            <person name="Riley M."/>
            <person name="Collado-Vides J."/>
            <person name="Glasner J.D."/>
            <person name="Rode C.K."/>
            <person name="Mayhew G.F."/>
            <person name="Gregor J."/>
            <person name="Davis N.W."/>
            <person name="Kirkpatrick H.A."/>
            <person name="Goeden M.A."/>
            <person name="Rose D.J."/>
            <person name="Mau B."/>
            <person name="Shao Y."/>
        </authorList>
    </citation>
    <scope>NUCLEOTIDE SEQUENCE [LARGE SCALE GENOMIC DNA]</scope>
    <source>
        <strain>K12 / MG1655 / ATCC 47076</strain>
    </source>
</reference>
<reference key="3">
    <citation type="journal article" date="2006" name="Mol. Syst. Biol.">
        <title>Highly accurate genome sequences of Escherichia coli K-12 strains MG1655 and W3110.</title>
        <authorList>
            <person name="Hayashi K."/>
            <person name="Morooka N."/>
            <person name="Yamamoto Y."/>
            <person name="Fujita K."/>
            <person name="Isono K."/>
            <person name="Choi S."/>
            <person name="Ohtsubo E."/>
            <person name="Baba T."/>
            <person name="Wanner B.L."/>
            <person name="Mori H."/>
            <person name="Horiuchi T."/>
        </authorList>
    </citation>
    <scope>NUCLEOTIDE SEQUENCE [LARGE SCALE GENOMIC DNA]</scope>
    <source>
        <strain>K12 / W3110 / ATCC 27325 / DSM 5911</strain>
    </source>
</reference>
<reference key="4">
    <citation type="journal article" date="1997" name="Electrophoresis">
        <title>Comparing the predicted and observed properties of proteins encoded in the genome of Escherichia coli K-12.</title>
        <authorList>
            <person name="Link A.J."/>
            <person name="Robison K."/>
            <person name="Church G.M."/>
        </authorList>
    </citation>
    <scope>PROTEIN SEQUENCE OF 27-37</scope>
    <source>
        <strain>K12 / EMG2</strain>
    </source>
</reference>
<dbReference type="EMBL" id="U00096">
    <property type="protein sequence ID" value="AAC75601.1"/>
    <property type="molecule type" value="Genomic_DNA"/>
</dbReference>
<dbReference type="EMBL" id="AP009048">
    <property type="protein sequence ID" value="BAA16457.1"/>
    <property type="molecule type" value="Genomic_DNA"/>
</dbReference>
<dbReference type="PIR" id="C65032">
    <property type="entry name" value="C65032"/>
</dbReference>
<dbReference type="RefSeq" id="NP_417043.1">
    <property type="nucleotide sequence ID" value="NC_000913.3"/>
</dbReference>
<dbReference type="RefSeq" id="WP_001142427.1">
    <property type="nucleotide sequence ID" value="NZ_LN832404.1"/>
</dbReference>
<dbReference type="SMR" id="P77269"/>
<dbReference type="BioGRID" id="4261316">
    <property type="interactions" value="35"/>
</dbReference>
<dbReference type="ComplexPortal" id="CPX-4468">
    <property type="entry name" value="YphDEF ABC transporter complex"/>
</dbReference>
<dbReference type="FunCoup" id="P77269">
    <property type="interactions" value="341"/>
</dbReference>
<dbReference type="IntAct" id="P77269">
    <property type="interactions" value="3"/>
</dbReference>
<dbReference type="STRING" id="511145.b2548"/>
<dbReference type="TCDB" id="3.A.1.2.27">
    <property type="family name" value="the atp-binding cassette (abc) superfamily"/>
</dbReference>
<dbReference type="jPOST" id="P77269"/>
<dbReference type="PaxDb" id="511145-b2548"/>
<dbReference type="DNASU" id="947020"/>
<dbReference type="EnsemblBacteria" id="AAC75601">
    <property type="protein sequence ID" value="AAC75601"/>
    <property type="gene ID" value="b2548"/>
</dbReference>
<dbReference type="GeneID" id="947020"/>
<dbReference type="KEGG" id="ecj:JW2532"/>
<dbReference type="KEGG" id="eco:b2548"/>
<dbReference type="KEGG" id="ecoc:C3026_14110"/>
<dbReference type="PATRIC" id="fig|1411691.4.peg.4186"/>
<dbReference type="EchoBASE" id="EB3240"/>
<dbReference type="eggNOG" id="COG1879">
    <property type="taxonomic scope" value="Bacteria"/>
</dbReference>
<dbReference type="HOGENOM" id="CLU_849644_0_0_6"/>
<dbReference type="InParanoid" id="P77269"/>
<dbReference type="OMA" id="HYNETMA"/>
<dbReference type="OrthoDB" id="3837830at2"/>
<dbReference type="PhylomeDB" id="P77269"/>
<dbReference type="BioCyc" id="EcoCyc:G7342-MONOMER"/>
<dbReference type="PRO" id="PR:P77269"/>
<dbReference type="Proteomes" id="UP000000625">
    <property type="component" value="Chromosome"/>
</dbReference>
<dbReference type="GO" id="GO:0055052">
    <property type="term" value="C:ATP-binding cassette (ABC) transporter complex, substrate-binding subunit-containing"/>
    <property type="evidence" value="ECO:0000303"/>
    <property type="project" value="ComplexPortal"/>
</dbReference>
<dbReference type="GO" id="GO:0016020">
    <property type="term" value="C:membrane"/>
    <property type="evidence" value="ECO:0000303"/>
    <property type="project" value="ComplexPortal"/>
</dbReference>
<dbReference type="GO" id="GO:0030288">
    <property type="term" value="C:outer membrane-bounded periplasmic space"/>
    <property type="evidence" value="ECO:0000318"/>
    <property type="project" value="GO_Central"/>
</dbReference>
<dbReference type="GO" id="GO:0030246">
    <property type="term" value="F:carbohydrate binding"/>
    <property type="evidence" value="ECO:0000318"/>
    <property type="project" value="GO_Central"/>
</dbReference>
<dbReference type="GO" id="GO:0055085">
    <property type="term" value="P:transmembrane transport"/>
    <property type="evidence" value="ECO:0000303"/>
    <property type="project" value="ComplexPortal"/>
</dbReference>
<dbReference type="Gene3D" id="3.40.50.2300">
    <property type="match status" value="2"/>
</dbReference>
<dbReference type="InterPro" id="IPR050555">
    <property type="entry name" value="Bact_Solute-Bind_Prot2"/>
</dbReference>
<dbReference type="InterPro" id="IPR028082">
    <property type="entry name" value="Peripla_BP_I"/>
</dbReference>
<dbReference type="InterPro" id="IPR025997">
    <property type="entry name" value="SBP_2_dom"/>
</dbReference>
<dbReference type="PANTHER" id="PTHR30036:SF7">
    <property type="entry name" value="ABC TRANSPORTER PERIPLASMIC-BINDING PROTEIN YPHF"/>
    <property type="match status" value="1"/>
</dbReference>
<dbReference type="PANTHER" id="PTHR30036">
    <property type="entry name" value="D-XYLOSE-BINDING PERIPLASMIC PROTEIN"/>
    <property type="match status" value="1"/>
</dbReference>
<dbReference type="Pfam" id="PF13407">
    <property type="entry name" value="Peripla_BP_4"/>
    <property type="match status" value="1"/>
</dbReference>
<dbReference type="SUPFAM" id="SSF53822">
    <property type="entry name" value="Periplasmic binding protein-like I"/>
    <property type="match status" value="1"/>
</dbReference>
<comment type="function">
    <text>Probably part of the binding-protein-dependent transport system YphDEF.</text>
</comment>
<comment type="subcellular location">
    <subcellularLocation>
        <location evidence="2">Periplasm</location>
    </subcellularLocation>
</comment>
<comment type="similarity">
    <text evidence="2">Belongs to the bacterial solute-binding protein 2 family.</text>
</comment>
<protein>
    <recommendedName>
        <fullName>ABC transporter periplasmic-binding protein YphF</fullName>
    </recommendedName>
</protein>
<gene>
    <name type="primary">yphF</name>
    <name type="ordered locus">b2548</name>
    <name type="ordered locus">JW2532</name>
</gene>
<sequence>MPTKMRTTRNLLLMATLLGSALFARAAEKEMTIGAIYLDTQGYYAGVRQGVQDAAKDSSVQVQLIETNAQGDISKESTFVDTLVARNVDAIILSAVSENGSSRTVRRASEAGIPVICYNTCINQKGVDKYVSAYLVGDPLEFGKKLGNAAADYFIANKIDQPKIAVINCEAFEVCVQRRKGFEEVLKSRVPGAQIVANQEGTVLDKAISVGEKLIISTPDLNAIMGESGGATLGAVKAVRNQNQAGKIAVFGSDMTTEIAQELENNQVLKAVVDISGKKMGNAVFAQTLKVINKQADGEKVIQVPIDLYTKTEDGKQWLATHVDGLP</sequence>
<name>YPHF_ECOLI</name>
<evidence type="ECO:0000269" key="1">
    <source>
    </source>
</evidence>
<evidence type="ECO:0000305" key="2"/>